<evidence type="ECO:0000255" key="1">
    <source>
        <dbReference type="PROSITE-ProRule" id="PRU01022"/>
    </source>
</evidence>
<evidence type="ECO:0000269" key="2">
    <source>
    </source>
</evidence>
<evidence type="ECO:0000269" key="3">
    <source>
    </source>
</evidence>
<evidence type="ECO:0000269" key="4">
    <source>
    </source>
</evidence>
<evidence type="ECO:0000269" key="5">
    <source>
    </source>
</evidence>
<evidence type="ECO:0000269" key="6">
    <source>
    </source>
</evidence>
<evidence type="ECO:0000269" key="7">
    <source>
    </source>
</evidence>
<evidence type="ECO:0000303" key="8">
    <source>
    </source>
</evidence>
<evidence type="ECO:0000303" key="9">
    <source>
    </source>
</evidence>
<evidence type="ECO:0000303" key="10">
    <source>
    </source>
</evidence>
<evidence type="ECO:0000303" key="11">
    <source>
    </source>
</evidence>
<evidence type="ECO:0000305" key="12"/>
<evidence type="ECO:0007744" key="13">
    <source>
    </source>
</evidence>
<organism>
    <name type="scientific">Saccharomyces cerevisiae (strain ATCC 204508 / S288c)</name>
    <name type="common">Baker's yeast</name>
    <dbReference type="NCBI Taxonomy" id="559292"/>
    <lineage>
        <taxon>Eukaryota</taxon>
        <taxon>Fungi</taxon>
        <taxon>Dikarya</taxon>
        <taxon>Ascomycota</taxon>
        <taxon>Saccharomycotina</taxon>
        <taxon>Saccharomycetes</taxon>
        <taxon>Saccharomycetales</taxon>
        <taxon>Saccharomycetaceae</taxon>
        <taxon>Saccharomyces</taxon>
    </lineage>
</organism>
<feature type="initiator methionine" description="Removed" evidence="7">
    <location>
        <position position="1"/>
    </location>
</feature>
<feature type="chain" id="PRO_0000124799" description="Sterol 24-C-methyltransferase ERG6">
    <location>
        <begin position="2"/>
        <end position="383"/>
    </location>
</feature>
<feature type="modified residue" description="N-acetylserine" evidence="7">
    <location>
        <position position="2"/>
    </location>
</feature>
<feature type="modified residue" description="Phosphoserine" evidence="13">
    <location>
        <position position="99"/>
    </location>
</feature>
<feature type="sequence conflict" description="In Ref. 2; AAB31378." evidence="12" ref="2">
    <original>E</original>
    <variation>EE</variation>
    <location>
        <position position="380"/>
    </location>
</feature>
<keyword id="KW-0007">Acetylation</keyword>
<keyword id="KW-0256">Endoplasmic reticulum</keyword>
<keyword id="KW-0444">Lipid biosynthesis</keyword>
<keyword id="KW-0443">Lipid metabolism</keyword>
<keyword id="KW-0489">Methyltransferase</keyword>
<keyword id="KW-0492">Microsome</keyword>
<keyword id="KW-0496">Mitochondrion</keyword>
<keyword id="KW-0597">Phosphoprotein</keyword>
<keyword id="KW-1185">Reference proteome</keyword>
<keyword id="KW-0949">S-adenosyl-L-methionine</keyword>
<keyword id="KW-0752">Steroid biosynthesis</keyword>
<keyword id="KW-0753">Steroid metabolism</keyword>
<keyword id="KW-0756">Sterol biosynthesis</keyword>
<keyword id="KW-1207">Sterol metabolism</keyword>
<keyword id="KW-0808">Transferase</keyword>
<comment type="function">
    <text evidence="6 8">Sterol 24-C-methyltransferase; part of the third module of ergosterol biosynthesis pathway that includes the late steps of the pathway (PubMed:6363386). ERG6 catalyzes the methyl transfer from S-adenosyl-methionine to the C-24 of zymosterol to form fecosterol (PubMed:6363386). The third module or late pathway involves the ergosterol synthesis itself through consecutive reactions that mainly occur in the endoplasmic reticulum (ER) membrane. Firstly, the squalene synthase ERG9 catalyzes the condensation of 2 farnesyl pyrophosphate moieties to form squalene, which is the precursor of all steroids. Squalene synthase is crucial for balancing the incorporation of farnesyl diphosphate (FPP) into sterol and nonsterol isoprene synthesis. Secondly, the squalene epoxidase ERG1 catalyzes the stereospecific oxidation of squalene to (S)-2,3-epoxysqualene, which is considered to be a rate-limiting enzyme in steroid biosynthesis. Then, the lanosterol synthase ERG7 catalyzes the cyclization of (S)-2,3 oxidosqualene to lanosterol, a reaction that forms the sterol core. In the next steps, lanosterol is transformed to zymosterol through a complex process involving various demethylation, reduction and desaturation reactions. The lanosterol 14-alpha-demethylase ERG11 (also known as CYP51) catalyzes C14-demethylation of lanosterol to produce 4,4'-dimethyl cholesta-8,14,24-triene-3-beta-ol, which is critical for ergosterol biosynthesis. The C-14 reductase ERG24 reduces the C14=C15 double bond of 4,4-dimethyl-cholesta-8,14,24-trienol to produce 4,4-dimethyl-cholesta-8,24-dienol. 4,4-dimethyl-cholesta-8,24-dienol is substrate of the C-4 demethylation complex ERG25-ERG26-ERG27 in which ERG25 catalyzes the three-step monooxygenation required for the demethylation of 4,4-dimethyl and 4alpha-methylsterols, ERG26 catalyzes the oxidative decarboxylation that results in a reduction of the 3-beta-hydroxy group at the C-3 carbon to an oxo group, and ERG27 is responsible for the reduction of the keto group on the C-3. ERG28 has a role as a scaffold to help anchor ERG25, ERG26 and ERG27 to the endoplasmic reticulum and ERG29 regulates the activity of the iron-containing C4-methylsterol oxidase ERG25. Then, the sterol 24-C-methyltransferase ERG6 catalyzes the methyl transfer from S-adenosyl-methionine to the C-24 of zymosterol to form fecosterol. The C-8 sterol isomerase ERG2 catalyzes the reaction which results in unsaturation at C-7 in the B ring of sterols and thus converts fecosterol to episterol. The sterol-C5-desaturase ERG3 then catalyzes the introduction of a C-5 double bond in the B ring to produce 5-dehydroepisterol. The C-22 sterol desaturase ERG5 further converts 5-dehydroepisterol into ergosta-5,7,22,24(28)-tetraen-3beta-ol by forming the C-22(23) double bond in the sterol side chain. Finally, ergosta-5,7,22,24(28)-tetraen-3beta-ol is substrate of the C-24(28) sterol reductase ERG4 to produce ergosterol (PubMed:32679672).</text>
</comment>
<comment type="catalytic activity">
    <reaction evidence="6">
        <text>zymosterol + S-adenosyl-L-methionine = fecosterol + S-adenosyl-L-homocysteine + H(+)</text>
        <dbReference type="Rhea" id="RHEA:21128"/>
        <dbReference type="ChEBI" id="CHEBI:15378"/>
        <dbReference type="ChEBI" id="CHEBI:17038"/>
        <dbReference type="ChEBI" id="CHEBI:18252"/>
        <dbReference type="ChEBI" id="CHEBI:57856"/>
        <dbReference type="ChEBI" id="CHEBI:59789"/>
        <dbReference type="EC" id="2.1.1.41"/>
    </reaction>
    <physiologicalReaction direction="left-to-right" evidence="6">
        <dbReference type="Rhea" id="RHEA:21129"/>
    </physiologicalReaction>
</comment>
<comment type="pathway">
    <text evidence="6">Steroid metabolism; ergosterol biosynthesis; ergosterol from zymosterol: step 1/5.</text>
</comment>
<comment type="subunit">
    <text evidence="3 4">Interacts with ERG28.</text>
</comment>
<comment type="interaction">
    <interactant intactId="EBI-6567">
        <id>P25087</id>
    </interactant>
    <interactant intactId="EBI-6567">
        <id>P25087</id>
        <label>ERG6</label>
    </interactant>
    <organismsDiffer>false</organismsDiffer>
    <experiments>3</experiments>
</comment>
<comment type="subcellular location">
    <subcellularLocation>
        <location evidence="6">Microsome</location>
    </subcellularLocation>
    <subcellularLocation>
        <location evidence="6">Mitochondrion</location>
    </subcellularLocation>
</comment>
<comment type="disruption phenotype">
    <text evidence="5 6">Abolishes the production of ergosterol.</text>
</comment>
<comment type="miscellaneous">
    <text evidence="2">Present with 53800 molecules/cell in log phase SD medium.</text>
</comment>
<comment type="similarity">
    <text evidence="1">Belongs to the class I-like SAM-binding methyltransferase superfamily. Erg6/SMT family.</text>
</comment>
<gene>
    <name evidence="9" type="primary">ERG6</name>
    <name type="synonym">ISE1</name>
    <name evidence="10" type="synonym">LIS1</name>
    <name evidence="11" type="synonym">SED6</name>
    <name type="ordered locus">YML008C</name>
    <name type="ORF">YM9571.10C</name>
</gene>
<reference key="1">
    <citation type="journal article" date="1994" name="Yeast">
        <title>SED6 is identical to ERG6, and encodes a putative methyltransferase required for ergosterol synthesis.</title>
        <authorList>
            <person name="Hardwick K.G."/>
            <person name="Pelham H.R.B."/>
        </authorList>
    </citation>
    <scope>NUCLEOTIDE SEQUENCE [GENOMIC DNA]</scope>
</reference>
<reference key="2">
    <citation type="journal article" date="1994" name="Biochim. Biophys. Acta">
        <title>Mutations in LIS1 (ERG6) gene confer increased sodium and lithium uptake in Saccharomyces cerevisiae.</title>
        <authorList>
            <person name="Welihinda A.A."/>
            <person name="Beavis A.D."/>
            <person name="Trumbly R.J."/>
        </authorList>
    </citation>
    <scope>NUCLEOTIDE SEQUENCE [GENOMIC DNA]</scope>
</reference>
<reference key="3">
    <citation type="journal article" date="1997" name="Nature">
        <title>The nucleotide sequence of Saccharomyces cerevisiae chromosome XIII.</title>
        <authorList>
            <person name="Bowman S."/>
            <person name="Churcher C.M."/>
            <person name="Badcock K."/>
            <person name="Brown D."/>
            <person name="Chillingworth T."/>
            <person name="Connor R."/>
            <person name="Dedman K."/>
            <person name="Devlin K."/>
            <person name="Gentles S."/>
            <person name="Hamlin N."/>
            <person name="Hunt S."/>
            <person name="Jagels K."/>
            <person name="Lye G."/>
            <person name="Moule S."/>
            <person name="Odell C."/>
            <person name="Pearson D."/>
            <person name="Rajandream M.A."/>
            <person name="Rice P."/>
            <person name="Skelton J."/>
            <person name="Walsh S.V."/>
            <person name="Whitehead S."/>
            <person name="Barrell B.G."/>
        </authorList>
    </citation>
    <scope>NUCLEOTIDE SEQUENCE [LARGE SCALE GENOMIC DNA]</scope>
    <source>
        <strain>ATCC 204508 / S288c</strain>
    </source>
</reference>
<reference key="4">
    <citation type="journal article" date="2014" name="G3 (Bethesda)">
        <title>The reference genome sequence of Saccharomyces cerevisiae: Then and now.</title>
        <authorList>
            <person name="Engel S.R."/>
            <person name="Dietrich F.S."/>
            <person name="Fisk D.G."/>
            <person name="Binkley G."/>
            <person name="Balakrishnan R."/>
            <person name="Costanzo M.C."/>
            <person name="Dwight S.S."/>
            <person name="Hitz B.C."/>
            <person name="Karra K."/>
            <person name="Nash R.S."/>
            <person name="Weng S."/>
            <person name="Wong E.D."/>
            <person name="Lloyd P."/>
            <person name="Skrzypek M.S."/>
            <person name="Miyasato S.R."/>
            <person name="Simison M."/>
            <person name="Cherry J.M."/>
        </authorList>
    </citation>
    <scope>GENOME REANNOTATION</scope>
    <source>
        <strain>ATCC 204508 / S288c</strain>
    </source>
</reference>
<reference key="5">
    <citation type="journal article" date="1991" name="Gene">
        <title>Characterization of PDR4, a Saccharomyces cerevisiae gene that confers pleiotropic drug resistance in high-copy number: identity with YAP1, encoding a transcriptional activator.</title>
        <authorList>
            <person name="Hussain M."/>
            <person name="Lenard J."/>
        </authorList>
    </citation>
    <scope>NUCLEOTIDE SEQUENCE [GENOMIC DNA] OF 1-258</scope>
</reference>
<reference key="6">
    <citation type="journal article" date="1984" name="J. Bacteriol.">
        <title>Sterol methylation in Saccharomyces cerevisiae.</title>
        <authorList>
            <person name="McCammon M.T."/>
            <person name="Hartmann M.A."/>
            <person name="Bottema C.D."/>
            <person name="Parks L.W."/>
        </authorList>
    </citation>
    <scope>FUNCTION</scope>
    <scope>CATALYTIC ACTIVITY</scope>
    <scope>DISRUPTION PHENOTYPE</scope>
    <scope>SUBCELLULAR LOCATION</scope>
</reference>
<reference key="7">
    <citation type="journal article" date="1997" name="Electrophoresis">
        <title>Proteome studies of Saccharomyces cerevisiae: identification and characterization of abundant proteins.</title>
        <authorList>
            <person name="Garrels J.I."/>
            <person name="McLaughlin C.S."/>
            <person name="Warner J.R."/>
            <person name="Futcher B."/>
            <person name="Latter G.I."/>
            <person name="Kobayashi R."/>
            <person name="Schwender B."/>
            <person name="Volpe T."/>
            <person name="Anderson D.S."/>
            <person name="Mesquita-Fuentes R."/>
            <person name="Payne W.E."/>
        </authorList>
    </citation>
    <scope>ACETYLATION AT SER-2</scope>
</reference>
<reference key="8">
    <citation type="journal article" date="2003" name="Nature">
        <title>Global analysis of protein expression in yeast.</title>
        <authorList>
            <person name="Ghaemmaghami S."/>
            <person name="Huh W.-K."/>
            <person name="Bower K."/>
            <person name="Howson R.W."/>
            <person name="Belle A."/>
            <person name="Dephoure N."/>
            <person name="O'Shea E.K."/>
            <person name="Weissman J.S."/>
        </authorList>
    </citation>
    <scope>LEVEL OF PROTEIN EXPRESSION [LARGE SCALE ANALYSIS]</scope>
</reference>
<reference key="9">
    <citation type="journal article" date="2004" name="Biochim. Biophys. Acta">
        <title>The ERG28-encoded protein, Erg28p, interacts with both the sterol C-4 demethylation enzyme complex as well as the late biosynthetic protein, the C-24 sterol methyltransferase (Erg6p).</title>
        <authorList>
            <person name="Mo C."/>
            <person name="Valachovic M."/>
            <person name="Bard M."/>
        </authorList>
    </citation>
    <scope>FUNCTION</scope>
    <scope>INTERACTION WITH ERG28</scope>
</reference>
<reference key="10">
    <citation type="journal article" date="2005" name="J. Lipid Res.">
        <title>Erg28p is a key protein in the yeast sterol biosynthetic enzyme complex.</title>
        <authorList>
            <person name="Mo C."/>
            <person name="Bard M."/>
        </authorList>
    </citation>
    <scope>FUNCTION</scope>
    <scope>INTERACTION WITH ERG28</scope>
</reference>
<reference key="11">
    <citation type="journal article" date="2008" name="Mol. Cell. Proteomics">
        <title>A multidimensional chromatography technology for in-depth phosphoproteome analysis.</title>
        <authorList>
            <person name="Albuquerque C.P."/>
            <person name="Smolka M.B."/>
            <person name="Payne S.H."/>
            <person name="Bafna V."/>
            <person name="Eng J."/>
            <person name="Zhou H."/>
        </authorList>
    </citation>
    <scope>PHOSPHORYLATION [LARGE SCALE ANALYSIS] AT SER-99</scope>
    <scope>IDENTIFICATION BY MASS SPECTROMETRY [LARGE SCALE ANALYSIS]</scope>
</reference>
<reference key="12">
    <citation type="journal article" date="2009" name="Science">
        <title>Global analysis of Cdk1 substrate phosphorylation sites provides insights into evolution.</title>
        <authorList>
            <person name="Holt L.J."/>
            <person name="Tuch B.B."/>
            <person name="Villen J."/>
            <person name="Johnson A.D."/>
            <person name="Gygi S.P."/>
            <person name="Morgan D.O."/>
        </authorList>
    </citation>
    <scope>IDENTIFICATION BY MASS SPECTROMETRY [LARGE SCALE ANALYSIS]</scope>
</reference>
<reference key="13">
    <citation type="journal article" date="2018" name="J. Biol. Chem.">
        <title>Altered sterol metabolism in budding yeast affects mitochondrial iron-sulfur (Fe-S) cluster synthesis.</title>
        <authorList>
            <person name="Ward D.M."/>
            <person name="Chen O.S."/>
            <person name="Li L."/>
            <person name="Kaplan J."/>
            <person name="Bhuiyan S.A."/>
            <person name="Natarajan S.K."/>
            <person name="Bard M."/>
            <person name="Cox J.E."/>
        </authorList>
    </citation>
    <scope>FUNCTION</scope>
</reference>
<reference key="14">
    <citation type="journal article" date="2020" name="Genes (Basel)">
        <title>Regulation of ergosterol biosynthesis in Saccharomyces cerevisiae.</title>
        <authorList>
            <person name="Jorda T."/>
            <person name="Puig S."/>
        </authorList>
    </citation>
    <scope>REVIEW ON ERGOSTEROL BIOSYNTHESIS</scope>
</reference>
<reference key="15">
    <citation type="journal article" date="2023" name="Sci. Rep.">
        <title>Yeast lacking the sterol C-5 desaturase Erg3 are tolerant to the anti-inflammatory triterpenoid saponin escin.</title>
        <authorList>
            <person name="Johnston E.J."/>
            <person name="Tallis J."/>
            <person name="Cunningham-Oakes E."/>
            <person name="Moses T."/>
            <person name="Moore S.J."/>
            <person name="Hosking S."/>
            <person name="Rosser S.J."/>
        </authorList>
    </citation>
    <scope>DISRUPTION PHENOTYPE</scope>
</reference>
<sequence length="383" mass="43431">MSETELRKRQAQFTRELHGDDIGKKTGLSALMSKNNSAQKEAVQKYLRNWDGRTDKDAEERRLEDYNEATHSYYNVVTDFYEYGWGSSFHFSRFYKGESFAASIARHEHYLAYKAGIQRGDLVLDVGCGVGGPAREIARFTGCNVIGLNNNDYQIAKAKYYAKKYNLSDQMDFVKGDFMKMDFEENTFDKVYAIEATCHAPKLEGVYSEIYKVLKPGGTFAVYEWVMTDKYDENNPEHRKIAYEIELGDGIPKMFHVDVARKALKNCGFEVLVSEDLADNDDEIPWYYPLTGEWKYVQNLANLATFFRTSYLGRQFTTAMVTVMEKLGLAPEGSKEVTAALENAAVGLVAGGKSKLFTPMMLFVARKPENAETPSQTSQEATQ</sequence>
<protein>
    <recommendedName>
        <fullName evidence="9">Sterol 24-C-methyltransferase ERG6</fullName>
        <shortName evidence="9">SCMT</shortName>
        <ecNumber evidence="6">2.1.1.41</ecNumber>
    </recommendedName>
    <alternativeName>
        <fullName evidence="12">Delta(24)-sterol C-methyltransferase ERG6</fullName>
    </alternativeName>
    <alternativeName>
        <fullName evidence="9">Ergosterol biosynthetic protein 6</fullName>
    </alternativeName>
</protein>
<accession>P25087</accession>
<accession>D6VZG6</accession>
<name>ERG6_YEAST</name>
<dbReference type="EC" id="2.1.1.41" evidence="6"/>
<dbReference type="EMBL" id="X74249">
    <property type="protein sequence ID" value="CAA52308.1"/>
    <property type="molecule type" value="Genomic_DNA"/>
</dbReference>
<dbReference type="EMBL" id="S72460">
    <property type="protein sequence ID" value="AAB31378.1"/>
    <property type="molecule type" value="Genomic_DNA"/>
</dbReference>
<dbReference type="EMBL" id="Z49810">
    <property type="protein sequence ID" value="CAA89944.1"/>
    <property type="molecule type" value="Genomic_DNA"/>
</dbReference>
<dbReference type="EMBL" id="X53830">
    <property type="protein sequence ID" value="CAA37826.1"/>
    <property type="molecule type" value="Genomic_DNA"/>
</dbReference>
<dbReference type="EMBL" id="BK006946">
    <property type="protein sequence ID" value="DAA09890.1"/>
    <property type="molecule type" value="Genomic_DNA"/>
</dbReference>
<dbReference type="PIR" id="S42003">
    <property type="entry name" value="S42003"/>
</dbReference>
<dbReference type="RefSeq" id="NP_013706.1">
    <property type="nucleotide sequence ID" value="NM_001182363.1"/>
</dbReference>
<dbReference type="SMR" id="P25087"/>
<dbReference type="BioGRID" id="35161">
    <property type="interactions" value="645"/>
</dbReference>
<dbReference type="DIP" id="DIP-3816N"/>
<dbReference type="FunCoup" id="P25087">
    <property type="interactions" value="393"/>
</dbReference>
<dbReference type="IntAct" id="P25087">
    <property type="interactions" value="17"/>
</dbReference>
<dbReference type="MINT" id="P25087"/>
<dbReference type="STRING" id="4932.YML008C"/>
<dbReference type="iPTMnet" id="P25087"/>
<dbReference type="PaxDb" id="4932-YML008C"/>
<dbReference type="PeptideAtlas" id="P25087"/>
<dbReference type="EnsemblFungi" id="YML008C_mRNA">
    <property type="protein sequence ID" value="YML008C"/>
    <property type="gene ID" value="YML008C"/>
</dbReference>
<dbReference type="GeneID" id="855003"/>
<dbReference type="KEGG" id="sce:YML008C"/>
<dbReference type="AGR" id="SGD:S000004467"/>
<dbReference type="SGD" id="S000004467">
    <property type="gene designation" value="ERG6"/>
</dbReference>
<dbReference type="VEuPathDB" id="FungiDB:YML008C"/>
<dbReference type="eggNOG" id="KOG1269">
    <property type="taxonomic scope" value="Eukaryota"/>
</dbReference>
<dbReference type="HOGENOM" id="CLU_039068_5_3_1"/>
<dbReference type="InParanoid" id="P25087"/>
<dbReference type="OMA" id="NGIATMM"/>
<dbReference type="OrthoDB" id="540004at2759"/>
<dbReference type="BioCyc" id="MetaCyc:MONOMER3O-188"/>
<dbReference type="BioCyc" id="YEAST:MONOMER3O-188"/>
<dbReference type="BRENDA" id="2.1.1.41">
    <property type="organism ID" value="984"/>
</dbReference>
<dbReference type="SABIO-RK" id="P25087"/>
<dbReference type="UniPathway" id="UPA00768">
    <property type="reaction ID" value="UER00760"/>
</dbReference>
<dbReference type="BioGRID-ORCS" id="855003">
    <property type="hits" value="1 hit in 10 CRISPR screens"/>
</dbReference>
<dbReference type="PRO" id="PR:P25087"/>
<dbReference type="Proteomes" id="UP000002311">
    <property type="component" value="Chromosome XIII"/>
</dbReference>
<dbReference type="RNAct" id="P25087">
    <property type="molecule type" value="protein"/>
</dbReference>
<dbReference type="GO" id="GO:0005783">
    <property type="term" value="C:endoplasmic reticulum"/>
    <property type="evidence" value="ECO:0000314"/>
    <property type="project" value="SGD"/>
</dbReference>
<dbReference type="GO" id="GO:0005811">
    <property type="term" value="C:lipid droplet"/>
    <property type="evidence" value="ECO:0000314"/>
    <property type="project" value="SGD"/>
</dbReference>
<dbReference type="GO" id="GO:0005741">
    <property type="term" value="C:mitochondrial outer membrane"/>
    <property type="evidence" value="ECO:0007005"/>
    <property type="project" value="SGD"/>
</dbReference>
<dbReference type="GO" id="GO:0005739">
    <property type="term" value="C:mitochondrion"/>
    <property type="evidence" value="ECO:0007005"/>
    <property type="project" value="SGD"/>
</dbReference>
<dbReference type="GO" id="GO:0042802">
    <property type="term" value="F:identical protein binding"/>
    <property type="evidence" value="ECO:0000353"/>
    <property type="project" value="IntAct"/>
</dbReference>
<dbReference type="GO" id="GO:0003838">
    <property type="term" value="F:sterol 24-C-methyltransferase activity"/>
    <property type="evidence" value="ECO:0000314"/>
    <property type="project" value="SGD"/>
</dbReference>
<dbReference type="GO" id="GO:0006696">
    <property type="term" value="P:ergosterol biosynthetic process"/>
    <property type="evidence" value="ECO:0000314"/>
    <property type="project" value="UniProt"/>
</dbReference>
<dbReference type="GO" id="GO:0032259">
    <property type="term" value="P:methylation"/>
    <property type="evidence" value="ECO:0007669"/>
    <property type="project" value="UniProtKB-KW"/>
</dbReference>
<dbReference type="CDD" id="cd02440">
    <property type="entry name" value="AdoMet_MTases"/>
    <property type="match status" value="1"/>
</dbReference>
<dbReference type="FunFam" id="3.40.50.150:FF:000121">
    <property type="entry name" value="Sterol 24-C-methyltransferase"/>
    <property type="match status" value="1"/>
</dbReference>
<dbReference type="Gene3D" id="3.40.50.150">
    <property type="entry name" value="Vaccinia Virus protein VP39"/>
    <property type="match status" value="1"/>
</dbReference>
<dbReference type="InterPro" id="IPR050447">
    <property type="entry name" value="Erg6_SMT_methyltransf"/>
</dbReference>
<dbReference type="InterPro" id="IPR013216">
    <property type="entry name" value="Methyltransf_11"/>
</dbReference>
<dbReference type="InterPro" id="IPR030384">
    <property type="entry name" value="MeTrfase_SMT"/>
</dbReference>
<dbReference type="InterPro" id="IPR029063">
    <property type="entry name" value="SAM-dependent_MTases_sf"/>
</dbReference>
<dbReference type="InterPro" id="IPR013705">
    <property type="entry name" value="Sterol_MeTrfase_C"/>
</dbReference>
<dbReference type="PANTHER" id="PTHR44068:SF1">
    <property type="entry name" value="HYPOTHETICAL LOC100005854"/>
    <property type="match status" value="1"/>
</dbReference>
<dbReference type="PANTHER" id="PTHR44068">
    <property type="entry name" value="ZGC:194242"/>
    <property type="match status" value="1"/>
</dbReference>
<dbReference type="Pfam" id="PF08241">
    <property type="entry name" value="Methyltransf_11"/>
    <property type="match status" value="1"/>
</dbReference>
<dbReference type="Pfam" id="PF08498">
    <property type="entry name" value="Sterol_MT_C"/>
    <property type="match status" value="1"/>
</dbReference>
<dbReference type="SUPFAM" id="SSF53335">
    <property type="entry name" value="S-adenosyl-L-methionine-dependent methyltransferases"/>
    <property type="match status" value="1"/>
</dbReference>
<dbReference type="PROSITE" id="PS51685">
    <property type="entry name" value="SAM_MT_ERG6_SMT"/>
    <property type="match status" value="1"/>
</dbReference>
<proteinExistence type="evidence at protein level"/>